<sequence length="32" mass="3369">MGNEFIASASISFIITLIGLTLGFALLKLQGE</sequence>
<feature type="chain" id="PRO_0000218010" description="Cytochrome b6-f complex subunit 7">
    <location>
        <begin position="1"/>
        <end position="32"/>
    </location>
</feature>
<feature type="transmembrane region" description="Helical" evidence="1">
    <location>
        <begin position="5"/>
        <end position="25"/>
    </location>
</feature>
<keyword id="KW-0150">Chloroplast</keyword>
<keyword id="KW-0249">Electron transport</keyword>
<keyword id="KW-0472">Membrane</keyword>
<keyword id="KW-0602">Photosynthesis</keyword>
<keyword id="KW-0934">Plastid</keyword>
<keyword id="KW-0793">Thylakoid</keyword>
<keyword id="KW-0812">Transmembrane</keyword>
<keyword id="KW-1133">Transmembrane helix</keyword>
<keyword id="KW-0813">Transport</keyword>
<gene>
    <name evidence="1" type="primary">petM</name>
    <name type="synonym">ycf31</name>
</gene>
<comment type="function">
    <text evidence="1">Component of the cytochrome b6-f complex, which mediates electron transfer between photosystem II (PSII) and photosystem I (PSI), cyclic electron flow around PSI, and state transitions.</text>
</comment>
<comment type="subunit">
    <text evidence="1">The 4 large subunits of the cytochrome b6-f complex are cytochrome b6, subunit IV (17 kDa polypeptide, PetD), cytochrome f and the Rieske protein, while the 4 small subunits are PetG, PetL, PetM and PetN. The complex functions as a dimer.</text>
</comment>
<comment type="subcellular location">
    <subcellularLocation>
        <location evidence="1">Plastid</location>
        <location evidence="1">Chloroplast thylakoid membrane</location>
        <topology evidence="1">Single-pass membrane protein</topology>
    </subcellularLocation>
</comment>
<comment type="similarity">
    <text evidence="1">Belongs to the PetM family.</text>
</comment>
<geneLocation type="chloroplast"/>
<accession>O78499</accession>
<evidence type="ECO:0000255" key="1">
    <source>
        <dbReference type="HAMAP-Rule" id="MF_00396"/>
    </source>
</evidence>
<organism>
    <name type="scientific">Guillardia theta</name>
    <name type="common">Cryptophyte</name>
    <name type="synonym">Cryptomonas phi</name>
    <dbReference type="NCBI Taxonomy" id="55529"/>
    <lineage>
        <taxon>Eukaryota</taxon>
        <taxon>Cryptophyceae</taxon>
        <taxon>Pyrenomonadales</taxon>
        <taxon>Geminigeraceae</taxon>
        <taxon>Guillardia</taxon>
    </lineage>
</organism>
<dbReference type="EMBL" id="AF041468">
    <property type="protein sequence ID" value="AAC35690.1"/>
    <property type="molecule type" value="Genomic_DNA"/>
</dbReference>
<dbReference type="RefSeq" id="NP_050756.1">
    <property type="nucleotide sequence ID" value="NC_000926.1"/>
</dbReference>
<dbReference type="SMR" id="O78499"/>
<dbReference type="GeneID" id="857061"/>
<dbReference type="HOGENOM" id="CLU_216743_2_1_1"/>
<dbReference type="GO" id="GO:0009535">
    <property type="term" value="C:chloroplast thylakoid membrane"/>
    <property type="evidence" value="ECO:0007669"/>
    <property type="project" value="UniProtKB-SubCell"/>
</dbReference>
<dbReference type="GO" id="GO:0009512">
    <property type="term" value="C:cytochrome b6f complex"/>
    <property type="evidence" value="ECO:0007669"/>
    <property type="project" value="InterPro"/>
</dbReference>
<dbReference type="GO" id="GO:0009055">
    <property type="term" value="F:electron transfer activity"/>
    <property type="evidence" value="ECO:0007669"/>
    <property type="project" value="UniProtKB-UniRule"/>
</dbReference>
<dbReference type="GO" id="GO:0015979">
    <property type="term" value="P:photosynthesis"/>
    <property type="evidence" value="ECO:0007669"/>
    <property type="project" value="UniProtKB-KW"/>
</dbReference>
<dbReference type="HAMAP" id="MF_00396">
    <property type="entry name" value="Cytb6_f_PetM"/>
    <property type="match status" value="1"/>
</dbReference>
<dbReference type="InterPro" id="IPR012595">
    <property type="entry name" value="PetM_cyt_b6/f_cplx_su7"/>
</dbReference>
<dbReference type="Pfam" id="PF08041">
    <property type="entry name" value="PetM"/>
    <property type="match status" value="1"/>
</dbReference>
<name>PETM_GUITH</name>
<proteinExistence type="inferred from homology"/>
<reference key="1">
    <citation type="journal article" date="1999" name="J. Mol. Evol.">
        <title>The plastid genome of the cryptophyte alga, Guillardia theta: complete sequence and conserved synteny groups confirm its common ancestry with red algae.</title>
        <authorList>
            <person name="Douglas S.E."/>
            <person name="Penny S.L."/>
        </authorList>
    </citation>
    <scope>NUCLEOTIDE SEQUENCE [LARGE SCALE GENOMIC DNA]</scope>
</reference>
<protein>
    <recommendedName>
        <fullName evidence="1">Cytochrome b6-f complex subunit 7</fullName>
    </recommendedName>
    <alternativeName>
        <fullName evidence="1">Cytochrome b6-f complex subunit PetM</fullName>
    </alternativeName>
    <alternativeName>
        <fullName evidence="1">Cytochrome b6-f complex subunit VII</fullName>
    </alternativeName>
</protein>